<keyword id="KW-0963">Cytoplasm</keyword>
<keyword id="KW-0378">Hydrolase</keyword>
<dbReference type="EC" id="3.1.1.-" evidence="1"/>
<dbReference type="EMBL" id="AE014613">
    <property type="protein sequence ID" value="AAO71880.1"/>
    <property type="molecule type" value="Genomic_DNA"/>
</dbReference>
<dbReference type="EMBL" id="AL513382">
    <property type="protein sequence ID" value="CAD06859.1"/>
    <property type="molecule type" value="Genomic_DNA"/>
</dbReference>
<dbReference type="RefSeq" id="NP_458816.1">
    <property type="nucleotide sequence ID" value="NC_003198.1"/>
</dbReference>
<dbReference type="RefSeq" id="WP_000049161.1">
    <property type="nucleotide sequence ID" value="NZ_WSUR01000012.1"/>
</dbReference>
<dbReference type="SMR" id="Q8XG87"/>
<dbReference type="STRING" id="220341.gene:17588559"/>
<dbReference type="GeneID" id="66758606"/>
<dbReference type="KEGG" id="stt:t4433"/>
<dbReference type="KEGG" id="sty:STY4738"/>
<dbReference type="PATRIC" id="fig|220341.7.peg.4839"/>
<dbReference type="eggNOG" id="COG2220">
    <property type="taxonomic scope" value="Bacteria"/>
</dbReference>
<dbReference type="HOGENOM" id="CLU_074775_0_0_6"/>
<dbReference type="OMA" id="HWDMWKG"/>
<dbReference type="OrthoDB" id="9800061at2"/>
<dbReference type="UniPathway" id="UPA00263">
    <property type="reaction ID" value="UER00377"/>
</dbReference>
<dbReference type="Proteomes" id="UP000000541">
    <property type="component" value="Chromosome"/>
</dbReference>
<dbReference type="Proteomes" id="UP000002670">
    <property type="component" value="Chromosome"/>
</dbReference>
<dbReference type="GO" id="GO:0005737">
    <property type="term" value="C:cytoplasm"/>
    <property type="evidence" value="ECO:0007669"/>
    <property type="project" value="UniProtKB-SubCell"/>
</dbReference>
<dbReference type="GO" id="GO:0035460">
    <property type="term" value="F:L-ascorbate 6-phosphate lactonase activity"/>
    <property type="evidence" value="ECO:0007669"/>
    <property type="project" value="InterPro"/>
</dbReference>
<dbReference type="GO" id="GO:0030145">
    <property type="term" value="F:manganese ion binding"/>
    <property type="evidence" value="ECO:0007669"/>
    <property type="project" value="InterPro"/>
</dbReference>
<dbReference type="GO" id="GO:0019854">
    <property type="term" value="P:L-ascorbic acid catabolic process"/>
    <property type="evidence" value="ECO:0007669"/>
    <property type="project" value="UniProtKB-UniRule"/>
</dbReference>
<dbReference type="CDD" id="cd16284">
    <property type="entry name" value="UlaG-like_MBL-fold"/>
    <property type="match status" value="1"/>
</dbReference>
<dbReference type="FunFam" id="3.60.15.10:FF:000004">
    <property type="entry name" value="Probable L-ascorbate-6-phosphate lactonase UlaG"/>
    <property type="match status" value="1"/>
</dbReference>
<dbReference type="Gene3D" id="3.60.15.10">
    <property type="entry name" value="Ribonuclease Z/Hydroxyacylglutathione hydrolase-like"/>
    <property type="match status" value="1"/>
</dbReference>
<dbReference type="HAMAP" id="MF_01266">
    <property type="entry name" value="UlaG"/>
    <property type="match status" value="1"/>
</dbReference>
<dbReference type="InterPro" id="IPR023951">
    <property type="entry name" value="L-ascorbate_6P_UlaG"/>
</dbReference>
<dbReference type="InterPro" id="IPR001279">
    <property type="entry name" value="Metallo-B-lactamas"/>
</dbReference>
<dbReference type="InterPro" id="IPR036866">
    <property type="entry name" value="RibonucZ/Hydroxyglut_hydro"/>
</dbReference>
<dbReference type="InterPro" id="IPR048021">
    <property type="entry name" value="UlaG-like_MBL-fold"/>
</dbReference>
<dbReference type="InterPro" id="IPR050114">
    <property type="entry name" value="UPF0173_UPF0282_UlaG_hydrolase"/>
</dbReference>
<dbReference type="NCBIfam" id="NF008688">
    <property type="entry name" value="PRK11709.1"/>
    <property type="match status" value="1"/>
</dbReference>
<dbReference type="PANTHER" id="PTHR43546:SF9">
    <property type="entry name" value="L-ASCORBATE-6-PHOSPHATE LACTONASE ULAG-RELATED"/>
    <property type="match status" value="1"/>
</dbReference>
<dbReference type="PANTHER" id="PTHR43546">
    <property type="entry name" value="UPF0173 METAL-DEPENDENT HYDROLASE MJ1163-RELATED"/>
    <property type="match status" value="1"/>
</dbReference>
<dbReference type="Pfam" id="PF12706">
    <property type="entry name" value="Lactamase_B_2"/>
    <property type="match status" value="1"/>
</dbReference>
<dbReference type="SUPFAM" id="SSF56281">
    <property type="entry name" value="Metallo-hydrolase/oxidoreductase"/>
    <property type="match status" value="1"/>
</dbReference>
<name>ULAG_SALTI</name>
<organism>
    <name type="scientific">Salmonella typhi</name>
    <dbReference type="NCBI Taxonomy" id="90370"/>
    <lineage>
        <taxon>Bacteria</taxon>
        <taxon>Pseudomonadati</taxon>
        <taxon>Pseudomonadota</taxon>
        <taxon>Gammaproteobacteria</taxon>
        <taxon>Enterobacterales</taxon>
        <taxon>Enterobacteriaceae</taxon>
        <taxon>Salmonella</taxon>
    </lineage>
</organism>
<accession>Q8XG87</accession>
<accession>Q7ALP9</accession>
<sequence length="354" mass="40073">MSKVQSITRESWILSTFPEWGSWLNEEIEQEQVAPGTFAMWWLGCTGIWLKSEGGTNVCVDFWCGTGKQSHGNPLMKTGHQMQRMAGVKKLQPNLRTTPFVLDPFAIRQIDAVLATHDHNDHIDVNVAAAVMQNCADDVPFIGPQTCVDLWVGWGVPKERCIVVKPGDVVKVKDIEIHALDAFDRTALITLPADQKAAGVLPDGMDVRAVNYLFKTPGGNLYHSGDSHYSNYYAKHGNEHQIDVALGSYGENPRGITDKMTSADILRMAESLNTKVVIPFHHDIWSNFQADPQEIRVLWEMKKDRLKYGFKPFIWQVGGKFTWPLDKDNFEYHYPRGFDDCFTIEPDLPFKSFL</sequence>
<reference key="1">
    <citation type="journal article" date="2003" name="J. Bacteriol.">
        <title>Comparative genomics of Salmonella enterica serovar Typhi strains Ty2 and CT18.</title>
        <authorList>
            <person name="Deng W."/>
            <person name="Liou S.-R."/>
            <person name="Plunkett G. III"/>
            <person name="Mayhew G.F."/>
            <person name="Rose D.J."/>
            <person name="Burland V."/>
            <person name="Kodoyianni V."/>
            <person name="Schwartz D.C."/>
            <person name="Blattner F.R."/>
        </authorList>
    </citation>
    <scope>NUCLEOTIDE SEQUENCE [LARGE SCALE GENOMIC DNA]</scope>
    <source>
        <strain>ATCC 700931 / Ty2</strain>
    </source>
</reference>
<reference key="2">
    <citation type="journal article" date="2001" name="Nature">
        <title>Complete genome sequence of a multiple drug resistant Salmonella enterica serovar Typhi CT18.</title>
        <authorList>
            <person name="Parkhill J."/>
            <person name="Dougan G."/>
            <person name="James K.D."/>
            <person name="Thomson N.R."/>
            <person name="Pickard D."/>
            <person name="Wain J."/>
            <person name="Churcher C.M."/>
            <person name="Mungall K.L."/>
            <person name="Bentley S.D."/>
            <person name="Holden M.T.G."/>
            <person name="Sebaihia M."/>
            <person name="Baker S."/>
            <person name="Basham D."/>
            <person name="Brooks K."/>
            <person name="Chillingworth T."/>
            <person name="Connerton P."/>
            <person name="Cronin A."/>
            <person name="Davis P."/>
            <person name="Davies R.M."/>
            <person name="Dowd L."/>
            <person name="White N."/>
            <person name="Farrar J."/>
            <person name="Feltwell T."/>
            <person name="Hamlin N."/>
            <person name="Haque A."/>
            <person name="Hien T.T."/>
            <person name="Holroyd S."/>
            <person name="Jagels K."/>
            <person name="Krogh A."/>
            <person name="Larsen T.S."/>
            <person name="Leather S."/>
            <person name="Moule S."/>
            <person name="O'Gaora P."/>
            <person name="Parry C."/>
            <person name="Quail M.A."/>
            <person name="Rutherford K.M."/>
            <person name="Simmonds M."/>
            <person name="Skelton J."/>
            <person name="Stevens K."/>
            <person name="Whitehead S."/>
            <person name="Barrell B.G."/>
        </authorList>
    </citation>
    <scope>NUCLEOTIDE SEQUENCE [LARGE SCALE GENOMIC DNA]</scope>
    <source>
        <strain>CT18</strain>
    </source>
</reference>
<feature type="chain" id="PRO_0000231487" description="Probable L-ascorbate-6-phosphate lactonase UlaG">
    <location>
        <begin position="1"/>
        <end position="354"/>
    </location>
</feature>
<proteinExistence type="inferred from homology"/>
<protein>
    <recommendedName>
        <fullName evidence="1">Probable L-ascorbate-6-phosphate lactonase UlaG</fullName>
        <ecNumber evidence="1">3.1.1.-</ecNumber>
    </recommendedName>
    <alternativeName>
        <fullName evidence="1">L-ascorbate utilization protein G</fullName>
    </alternativeName>
</protein>
<gene>
    <name evidence="1" type="primary">ulaG</name>
    <name type="ordered locus">STY4738</name>
    <name type="ordered locus">t4433</name>
</gene>
<comment type="function">
    <text evidence="1">Probably catalyzes the hydrolysis of L-ascorbate-6-P into 3-keto-L-gulonate-6-P. Is essential for L-ascorbate utilization under anaerobic conditions.</text>
</comment>
<comment type="catalytic activity">
    <reaction evidence="1">
        <text>L-ascorbate 6-phosphate + H2O = 3-dehydro-L-gulonate 6-phosphate</text>
        <dbReference type="Rhea" id="RHEA:28803"/>
        <dbReference type="ChEBI" id="CHEBI:15377"/>
        <dbReference type="ChEBI" id="CHEBI:58774"/>
        <dbReference type="ChEBI" id="CHEBI:61698"/>
    </reaction>
</comment>
<comment type="cofactor">
    <cofactor evidence="1">
        <name>a divalent metal cation</name>
        <dbReference type="ChEBI" id="CHEBI:60240"/>
    </cofactor>
</comment>
<comment type="pathway">
    <text evidence="1">Cofactor degradation; L-ascorbate degradation; D-xylulose 5-phosphate from L-ascorbate: step 1/4.</text>
</comment>
<comment type="subcellular location">
    <subcellularLocation>
        <location evidence="1">Cytoplasm</location>
    </subcellularLocation>
</comment>
<comment type="induction">
    <text evidence="1">Induced by L-ascorbate. Repressed by UlaR.</text>
</comment>
<comment type="similarity">
    <text evidence="1">Belongs to the UlaG family.</text>
</comment>
<evidence type="ECO:0000255" key="1">
    <source>
        <dbReference type="HAMAP-Rule" id="MF_01266"/>
    </source>
</evidence>